<comment type="function">
    <text evidence="1">Acts as a histone H2A/H2B chaperone in nucleosome assembly.</text>
</comment>
<comment type="subcellular location">
    <subcellularLocation>
        <location evidence="1">Nucleus</location>
    </subcellularLocation>
    <subcellularLocation>
        <location evidence="1">Cytoplasm</location>
    </subcellularLocation>
</comment>
<comment type="domain">
    <text>The acidic domain is probably involved in the interaction with histones.</text>
</comment>
<comment type="similarity">
    <text evidence="4">Belongs to the nucleosome assembly protein (NAP) family.</text>
</comment>
<feature type="chain" id="PRO_0000423706" description="NAP1-related protein 2">
    <location>
        <begin position="1"/>
        <end position="252"/>
    </location>
</feature>
<feature type="region of interest" description="Disordered" evidence="3">
    <location>
        <begin position="1"/>
        <end position="23"/>
    </location>
</feature>
<feature type="region of interest" description="Disordered" evidence="3">
    <location>
        <begin position="222"/>
        <end position="252"/>
    </location>
</feature>
<feature type="coiled-coil region" evidence="2">
    <location>
        <begin position="26"/>
        <end position="67"/>
    </location>
</feature>
<feature type="compositionally biased region" description="Basic and acidic residues" evidence="3">
    <location>
        <begin position="1"/>
        <end position="15"/>
    </location>
</feature>
<feature type="compositionally biased region" description="Acidic residues" evidence="3">
    <location>
        <begin position="226"/>
        <end position="252"/>
    </location>
</feature>
<feature type="sequence conflict" description="In Ref. 2; ABR26120." evidence="4" ref="2">
    <original>I</original>
    <variation>V</variation>
    <location>
        <position position="76"/>
    </location>
</feature>
<feature type="sequence conflict" description="In Ref. 2; ABR26120." evidence="4" ref="2">
    <original>C</original>
    <variation>S</variation>
    <location>
        <position position="159"/>
    </location>
</feature>
<gene>
    <name type="ORF">OsI_07785</name>
</gene>
<dbReference type="EMBL" id="CM000127">
    <property type="protein sequence ID" value="EEC73468.1"/>
    <property type="molecule type" value="Genomic_DNA"/>
</dbReference>
<dbReference type="EMBL" id="EF576532">
    <property type="protein sequence ID" value="ABR26120.1"/>
    <property type="molecule type" value="mRNA"/>
</dbReference>
<dbReference type="SMR" id="B8AEC1"/>
<dbReference type="STRING" id="39946.B8AEC1"/>
<dbReference type="EnsemblPlants" id="BGIOSGA006189-TA">
    <property type="protein sequence ID" value="BGIOSGA006189-PA"/>
    <property type="gene ID" value="BGIOSGA006189"/>
</dbReference>
<dbReference type="EnsemblPlants" id="OsGoSa_02g0022400.01">
    <property type="protein sequence ID" value="OsGoSa_02g0022400.01"/>
    <property type="gene ID" value="OsGoSa_02g0022400"/>
</dbReference>
<dbReference type="EnsemblPlants" id="OsIR64_02g0021760.01">
    <property type="protein sequence ID" value="OsIR64_02g0021760.01"/>
    <property type="gene ID" value="OsIR64_02g0021760"/>
</dbReference>
<dbReference type="EnsemblPlants" id="OsLiXu_02g0022090.01">
    <property type="protein sequence ID" value="OsLiXu_02g0022090.01"/>
    <property type="gene ID" value="OsLiXu_02g0022090"/>
</dbReference>
<dbReference type="EnsemblPlants" id="OsMH63_02G022450_01">
    <property type="protein sequence ID" value="OsMH63_02G022450_01"/>
    <property type="gene ID" value="OsMH63_02G022450"/>
</dbReference>
<dbReference type="EnsemblPlants" id="OsPr106_02g0022010.01">
    <property type="protein sequence ID" value="OsPr106_02g0022010.01"/>
    <property type="gene ID" value="OsPr106_02g0022010"/>
</dbReference>
<dbReference type="EnsemblPlants" id="OsZS97_02G021780_01">
    <property type="protein sequence ID" value="OsZS97_02G021780_01"/>
    <property type="gene ID" value="OsZS97_02G021780"/>
</dbReference>
<dbReference type="Gramene" id="BGIOSGA006189-TA">
    <property type="protein sequence ID" value="BGIOSGA006189-PA"/>
    <property type="gene ID" value="BGIOSGA006189"/>
</dbReference>
<dbReference type="Gramene" id="OsGoSa_02g0022400.01">
    <property type="protein sequence ID" value="OsGoSa_02g0022400.01"/>
    <property type="gene ID" value="OsGoSa_02g0022400"/>
</dbReference>
<dbReference type="Gramene" id="OsIR64_02g0021760.01">
    <property type="protein sequence ID" value="OsIR64_02g0021760.01"/>
    <property type="gene ID" value="OsIR64_02g0021760"/>
</dbReference>
<dbReference type="Gramene" id="OsLiXu_02g0022090.01">
    <property type="protein sequence ID" value="OsLiXu_02g0022090.01"/>
    <property type="gene ID" value="OsLiXu_02g0022090"/>
</dbReference>
<dbReference type="Gramene" id="OsMH63_02G022450_01">
    <property type="protein sequence ID" value="OsMH63_02G022450_01"/>
    <property type="gene ID" value="OsMH63_02G022450"/>
</dbReference>
<dbReference type="Gramene" id="OsPr106_02g0022010.01">
    <property type="protein sequence ID" value="OsPr106_02g0022010.01"/>
    <property type="gene ID" value="OsPr106_02g0022010"/>
</dbReference>
<dbReference type="Gramene" id="OsZS97_02G021780_01">
    <property type="protein sequence ID" value="OsZS97_02G021780_01"/>
    <property type="gene ID" value="OsZS97_02G021780"/>
</dbReference>
<dbReference type="HOGENOM" id="CLU_051687_0_0_1"/>
<dbReference type="OMA" id="WPVALMN"/>
<dbReference type="OrthoDB" id="19419at2759"/>
<dbReference type="Proteomes" id="UP000007015">
    <property type="component" value="Chromosome 2"/>
</dbReference>
<dbReference type="GO" id="GO:0005737">
    <property type="term" value="C:cytoplasm"/>
    <property type="evidence" value="ECO:0007669"/>
    <property type="project" value="UniProtKB-SubCell"/>
</dbReference>
<dbReference type="GO" id="GO:0005634">
    <property type="term" value="C:nucleus"/>
    <property type="evidence" value="ECO:0007669"/>
    <property type="project" value="UniProtKB-SubCell"/>
</dbReference>
<dbReference type="GO" id="GO:0042393">
    <property type="term" value="F:histone binding"/>
    <property type="evidence" value="ECO:0007669"/>
    <property type="project" value="UniProtKB-ARBA"/>
</dbReference>
<dbReference type="GO" id="GO:0000724">
    <property type="term" value="P:double-strand break repair via homologous recombination"/>
    <property type="evidence" value="ECO:0007669"/>
    <property type="project" value="UniProtKB-ARBA"/>
</dbReference>
<dbReference type="GO" id="GO:0006334">
    <property type="term" value="P:nucleosome assembly"/>
    <property type="evidence" value="ECO:0007669"/>
    <property type="project" value="InterPro"/>
</dbReference>
<dbReference type="Gene3D" id="1.20.5.1500">
    <property type="match status" value="1"/>
</dbReference>
<dbReference type="Gene3D" id="3.30.1120.90">
    <property type="entry name" value="Nucleosome assembly protein"/>
    <property type="match status" value="1"/>
</dbReference>
<dbReference type="InterPro" id="IPR037231">
    <property type="entry name" value="NAP-like_sf"/>
</dbReference>
<dbReference type="InterPro" id="IPR002164">
    <property type="entry name" value="NAP_family"/>
</dbReference>
<dbReference type="PANTHER" id="PTHR11875">
    <property type="entry name" value="TESTIS-SPECIFIC Y-ENCODED PROTEIN"/>
    <property type="match status" value="1"/>
</dbReference>
<dbReference type="Pfam" id="PF00956">
    <property type="entry name" value="NAP"/>
    <property type="match status" value="1"/>
</dbReference>
<dbReference type="SUPFAM" id="SSF143113">
    <property type="entry name" value="NAP-like"/>
    <property type="match status" value="1"/>
</dbReference>
<proteinExistence type="evidence at transcript level"/>
<protein>
    <recommendedName>
        <fullName>NAP1-related protein 2</fullName>
    </recommendedName>
    <alternativeName>
        <fullName>Protein SET homolog 2</fullName>
    </alternativeName>
</protein>
<name>NRP2_ORYSI</name>
<evidence type="ECO:0000250" key="1"/>
<evidence type="ECO:0000255" key="2"/>
<evidence type="ECO:0000256" key="3">
    <source>
        <dbReference type="SAM" id="MobiDB-lite"/>
    </source>
</evidence>
<evidence type="ECO:0000305" key="4"/>
<reference key="1">
    <citation type="journal article" date="2005" name="PLoS Biol.">
        <title>The genomes of Oryza sativa: a history of duplications.</title>
        <authorList>
            <person name="Yu J."/>
            <person name="Wang J."/>
            <person name="Lin W."/>
            <person name="Li S."/>
            <person name="Li H."/>
            <person name="Zhou J."/>
            <person name="Ni P."/>
            <person name="Dong W."/>
            <person name="Hu S."/>
            <person name="Zeng C."/>
            <person name="Zhang J."/>
            <person name="Zhang Y."/>
            <person name="Li R."/>
            <person name="Xu Z."/>
            <person name="Li S."/>
            <person name="Li X."/>
            <person name="Zheng H."/>
            <person name="Cong L."/>
            <person name="Lin L."/>
            <person name="Yin J."/>
            <person name="Geng J."/>
            <person name="Li G."/>
            <person name="Shi J."/>
            <person name="Liu J."/>
            <person name="Lv H."/>
            <person name="Li J."/>
            <person name="Wang J."/>
            <person name="Deng Y."/>
            <person name="Ran L."/>
            <person name="Shi X."/>
            <person name="Wang X."/>
            <person name="Wu Q."/>
            <person name="Li C."/>
            <person name="Ren X."/>
            <person name="Wang J."/>
            <person name="Wang X."/>
            <person name="Li D."/>
            <person name="Liu D."/>
            <person name="Zhang X."/>
            <person name="Ji Z."/>
            <person name="Zhao W."/>
            <person name="Sun Y."/>
            <person name="Zhang Z."/>
            <person name="Bao J."/>
            <person name="Han Y."/>
            <person name="Dong L."/>
            <person name="Ji J."/>
            <person name="Chen P."/>
            <person name="Wu S."/>
            <person name="Liu J."/>
            <person name="Xiao Y."/>
            <person name="Bu D."/>
            <person name="Tan J."/>
            <person name="Yang L."/>
            <person name="Ye C."/>
            <person name="Zhang J."/>
            <person name="Xu J."/>
            <person name="Zhou Y."/>
            <person name="Yu Y."/>
            <person name="Zhang B."/>
            <person name="Zhuang S."/>
            <person name="Wei H."/>
            <person name="Liu B."/>
            <person name="Lei M."/>
            <person name="Yu H."/>
            <person name="Li Y."/>
            <person name="Xu H."/>
            <person name="Wei S."/>
            <person name="He X."/>
            <person name="Fang L."/>
            <person name="Zhang Z."/>
            <person name="Zhang Y."/>
            <person name="Huang X."/>
            <person name="Su Z."/>
            <person name="Tong W."/>
            <person name="Li J."/>
            <person name="Tong Z."/>
            <person name="Li S."/>
            <person name="Ye J."/>
            <person name="Wang L."/>
            <person name="Fang L."/>
            <person name="Lei T."/>
            <person name="Chen C.-S."/>
            <person name="Chen H.-C."/>
            <person name="Xu Z."/>
            <person name="Li H."/>
            <person name="Huang H."/>
            <person name="Zhang F."/>
            <person name="Xu H."/>
            <person name="Li N."/>
            <person name="Zhao C."/>
            <person name="Li S."/>
            <person name="Dong L."/>
            <person name="Huang Y."/>
            <person name="Li L."/>
            <person name="Xi Y."/>
            <person name="Qi Q."/>
            <person name="Li W."/>
            <person name="Zhang B."/>
            <person name="Hu W."/>
            <person name="Zhang Y."/>
            <person name="Tian X."/>
            <person name="Jiao Y."/>
            <person name="Liang X."/>
            <person name="Jin J."/>
            <person name="Gao L."/>
            <person name="Zheng W."/>
            <person name="Hao B."/>
            <person name="Liu S.-M."/>
            <person name="Wang W."/>
            <person name="Yuan L."/>
            <person name="Cao M."/>
            <person name="McDermott J."/>
            <person name="Samudrala R."/>
            <person name="Wang J."/>
            <person name="Wong G.K.-S."/>
            <person name="Yang H."/>
        </authorList>
    </citation>
    <scope>NUCLEOTIDE SEQUENCE [LARGE SCALE GENOMIC DNA]</scope>
    <source>
        <strain>cv. 93-11</strain>
    </source>
</reference>
<reference key="2">
    <citation type="submission" date="2007-04" db="EMBL/GenBank/DDBJ databases">
        <title>A comparative transcriptome map of early and late salinity stress responses in contrasting genotypes of Oryza sativa L.</title>
        <authorList>
            <person name="Kumari S."/>
            <person name="Panjabi V."/>
            <person name="Singla-Pareek S.L."/>
            <person name="Sopory S.K."/>
            <person name="Pareek A."/>
        </authorList>
    </citation>
    <scope>NUCLEOTIDE SEQUENCE [MRNA] OF 1-243</scope>
    <source>
        <tissue>Shoot</tissue>
    </source>
</reference>
<sequence length="252" mass="28618">MTAPADKGKKAKTDADGGAAEENEQIDGALVLSIEKLQEIQDELEKVNEEASDKVLEVEQKYSEIRRPVYLRRSDIIQTIPDFWLTAFLSHPLLSELLTEEDQKMFKYLESVDVDDSKDVKSGYSITLTFSENPYFEDKELTKTYAFADDGTTTINATCIKWKEGMEIANGNAKKKGSKRPLVEESFFTWFTDTEHKSLADGVQDEVAEIIKEDLWPNPLKYFNNEAEELGEDDDEEGSDADEGEEDEEEEN</sequence>
<accession>B8AEC1</accession>
<accession>A6N1K0</accession>
<keyword id="KW-0143">Chaperone</keyword>
<keyword id="KW-0175">Coiled coil</keyword>
<keyword id="KW-0963">Cytoplasm</keyword>
<keyword id="KW-0539">Nucleus</keyword>
<keyword id="KW-1185">Reference proteome</keyword>
<organism>
    <name type="scientific">Oryza sativa subsp. indica</name>
    <name type="common">Rice</name>
    <dbReference type="NCBI Taxonomy" id="39946"/>
    <lineage>
        <taxon>Eukaryota</taxon>
        <taxon>Viridiplantae</taxon>
        <taxon>Streptophyta</taxon>
        <taxon>Embryophyta</taxon>
        <taxon>Tracheophyta</taxon>
        <taxon>Spermatophyta</taxon>
        <taxon>Magnoliopsida</taxon>
        <taxon>Liliopsida</taxon>
        <taxon>Poales</taxon>
        <taxon>Poaceae</taxon>
        <taxon>BOP clade</taxon>
        <taxon>Oryzoideae</taxon>
        <taxon>Oryzeae</taxon>
        <taxon>Oryzinae</taxon>
        <taxon>Oryza</taxon>
        <taxon>Oryza sativa</taxon>
    </lineage>
</organism>